<reference key="1">
    <citation type="journal article" date="1997" name="Nature">
        <title>The nucleotide sequence of Saccharomyces cerevisiae chromosome IV.</title>
        <authorList>
            <person name="Jacq C."/>
            <person name="Alt-Moerbe J."/>
            <person name="Andre B."/>
            <person name="Arnold W."/>
            <person name="Bahr A."/>
            <person name="Ballesta J.P.G."/>
            <person name="Bargues M."/>
            <person name="Baron L."/>
            <person name="Becker A."/>
            <person name="Biteau N."/>
            <person name="Bloecker H."/>
            <person name="Blugeon C."/>
            <person name="Boskovic J."/>
            <person name="Brandt P."/>
            <person name="Brueckner M."/>
            <person name="Buitrago M.J."/>
            <person name="Coster F."/>
            <person name="Delaveau T."/>
            <person name="del Rey F."/>
            <person name="Dujon B."/>
            <person name="Eide L.G."/>
            <person name="Garcia-Cantalejo J.M."/>
            <person name="Goffeau A."/>
            <person name="Gomez-Peris A."/>
            <person name="Granotier C."/>
            <person name="Hanemann V."/>
            <person name="Hankeln T."/>
            <person name="Hoheisel J.D."/>
            <person name="Jaeger W."/>
            <person name="Jimenez A."/>
            <person name="Jonniaux J.-L."/>
            <person name="Kraemer C."/>
            <person name="Kuester H."/>
            <person name="Laamanen P."/>
            <person name="Legros Y."/>
            <person name="Louis E.J."/>
            <person name="Moeller-Rieker S."/>
            <person name="Monnet A."/>
            <person name="Moro M."/>
            <person name="Mueller-Auer S."/>
            <person name="Nussbaumer B."/>
            <person name="Paricio N."/>
            <person name="Paulin L."/>
            <person name="Perea J."/>
            <person name="Perez-Alonso M."/>
            <person name="Perez-Ortin J.E."/>
            <person name="Pohl T.M."/>
            <person name="Prydz H."/>
            <person name="Purnelle B."/>
            <person name="Rasmussen S.W."/>
            <person name="Remacha M.A."/>
            <person name="Revuelta J.L."/>
            <person name="Rieger M."/>
            <person name="Salom D."/>
            <person name="Saluz H.P."/>
            <person name="Saiz J.E."/>
            <person name="Saren A.-M."/>
            <person name="Schaefer M."/>
            <person name="Scharfe M."/>
            <person name="Schmidt E.R."/>
            <person name="Schneider C."/>
            <person name="Scholler P."/>
            <person name="Schwarz S."/>
            <person name="Soler-Mira A."/>
            <person name="Urrestarazu L.A."/>
            <person name="Verhasselt P."/>
            <person name="Vissers S."/>
            <person name="Voet M."/>
            <person name="Volckaert G."/>
            <person name="Wagner G."/>
            <person name="Wambutt R."/>
            <person name="Wedler E."/>
            <person name="Wedler H."/>
            <person name="Woelfl S."/>
            <person name="Harris D.E."/>
            <person name="Bowman S."/>
            <person name="Brown D."/>
            <person name="Churcher C.M."/>
            <person name="Connor R."/>
            <person name="Dedman K."/>
            <person name="Gentles S."/>
            <person name="Hamlin N."/>
            <person name="Hunt S."/>
            <person name="Jones L."/>
            <person name="McDonald S."/>
            <person name="Murphy L.D."/>
            <person name="Niblett D."/>
            <person name="Odell C."/>
            <person name="Oliver K."/>
            <person name="Rajandream M.A."/>
            <person name="Richards C."/>
            <person name="Shore L."/>
            <person name="Walsh S.V."/>
            <person name="Barrell B.G."/>
            <person name="Dietrich F.S."/>
            <person name="Mulligan J.T."/>
            <person name="Allen E."/>
            <person name="Araujo R."/>
            <person name="Aviles E."/>
            <person name="Berno A."/>
            <person name="Carpenter J."/>
            <person name="Chen E."/>
            <person name="Cherry J.M."/>
            <person name="Chung E."/>
            <person name="Duncan M."/>
            <person name="Hunicke-Smith S."/>
            <person name="Hyman R.W."/>
            <person name="Komp C."/>
            <person name="Lashkari D."/>
            <person name="Lew H."/>
            <person name="Lin D."/>
            <person name="Mosedale D."/>
            <person name="Nakahara K."/>
            <person name="Namath A."/>
            <person name="Oefner P."/>
            <person name="Oh C."/>
            <person name="Petel F.X."/>
            <person name="Roberts D."/>
            <person name="Schramm S."/>
            <person name="Schroeder M."/>
            <person name="Shogren T."/>
            <person name="Shroff N."/>
            <person name="Winant A."/>
            <person name="Yelton M.A."/>
            <person name="Botstein D."/>
            <person name="Davis R.W."/>
            <person name="Johnston M."/>
            <person name="Andrews S."/>
            <person name="Brinkman R."/>
            <person name="Cooper J."/>
            <person name="Ding H."/>
            <person name="Du Z."/>
            <person name="Favello A."/>
            <person name="Fulton L."/>
            <person name="Gattung S."/>
            <person name="Greco T."/>
            <person name="Hallsworth K."/>
            <person name="Hawkins J."/>
            <person name="Hillier L.W."/>
            <person name="Jier M."/>
            <person name="Johnson D."/>
            <person name="Johnston L."/>
            <person name="Kirsten J."/>
            <person name="Kucaba T."/>
            <person name="Langston Y."/>
            <person name="Latreille P."/>
            <person name="Le T."/>
            <person name="Mardis E."/>
            <person name="Menezes S."/>
            <person name="Miller N."/>
            <person name="Nhan M."/>
            <person name="Pauley A."/>
            <person name="Peluso D."/>
            <person name="Rifkin L."/>
            <person name="Riles L."/>
            <person name="Taich A."/>
            <person name="Trevaskis E."/>
            <person name="Vignati D."/>
            <person name="Wilcox L."/>
            <person name="Wohldman P."/>
            <person name="Vaudin M."/>
            <person name="Wilson R."/>
            <person name="Waterston R."/>
            <person name="Albermann K."/>
            <person name="Hani J."/>
            <person name="Heumann K."/>
            <person name="Kleine K."/>
            <person name="Mewes H.-W."/>
            <person name="Zollner A."/>
            <person name="Zaccaria P."/>
        </authorList>
    </citation>
    <scope>NUCLEOTIDE SEQUENCE [LARGE SCALE GENOMIC DNA]</scope>
    <source>
        <strain>ATCC 204508 / S288c</strain>
    </source>
</reference>
<reference key="2">
    <citation type="journal article" date="2014" name="G3 (Bethesda)">
        <title>The reference genome sequence of Saccharomyces cerevisiae: Then and now.</title>
        <authorList>
            <person name="Engel S.R."/>
            <person name="Dietrich F.S."/>
            <person name="Fisk D.G."/>
            <person name="Binkley G."/>
            <person name="Balakrishnan R."/>
            <person name="Costanzo M.C."/>
            <person name="Dwight S.S."/>
            <person name="Hitz B.C."/>
            <person name="Karra K."/>
            <person name="Nash R.S."/>
            <person name="Weng S."/>
            <person name="Wong E.D."/>
            <person name="Lloyd P."/>
            <person name="Skrzypek M.S."/>
            <person name="Miyasato S.R."/>
            <person name="Simison M."/>
            <person name="Cherry J.M."/>
        </authorList>
    </citation>
    <scope>GENOME REANNOTATION</scope>
    <source>
        <strain>ATCC 204508 / S288c</strain>
    </source>
</reference>
<reference key="3">
    <citation type="journal article" date="2007" name="Genome Res.">
        <title>Approaching a complete repository of sequence-verified protein-encoding clones for Saccharomyces cerevisiae.</title>
        <authorList>
            <person name="Hu Y."/>
            <person name="Rolfs A."/>
            <person name="Bhullar B."/>
            <person name="Murthy T.V.S."/>
            <person name="Zhu C."/>
            <person name="Berger M.F."/>
            <person name="Camargo A.A."/>
            <person name="Kelley F."/>
            <person name="McCarron S."/>
            <person name="Jepson D."/>
            <person name="Richardson A."/>
            <person name="Raphael J."/>
            <person name="Moreira D."/>
            <person name="Taycher E."/>
            <person name="Zuo D."/>
            <person name="Mohr S."/>
            <person name="Kane M.F."/>
            <person name="Williamson J."/>
            <person name="Simpson A.J.G."/>
            <person name="Bulyk M.L."/>
            <person name="Harlow E."/>
            <person name="Marsischky G."/>
            <person name="Kolodner R.D."/>
            <person name="LaBaer J."/>
        </authorList>
    </citation>
    <scope>NUCLEOTIDE SEQUENCE [GENOMIC DNA]</scope>
    <source>
        <strain>ATCC 204508 / S288c</strain>
    </source>
</reference>
<evidence type="ECO:0000255" key="1"/>
<evidence type="ECO:0000305" key="2"/>
<evidence type="ECO:0000305" key="3">
    <source>
    </source>
</evidence>
<gene>
    <name type="ordered locus">YDR053W</name>
</gene>
<sequence length="131" mass="14752">MRESLFIIFFQFVCHSSNSLGVTLGSTFFRPVPLLTWTAPSIDLALSILALFFSCKCCCCWSSRRSRDLFFGKDSVVLLLLQLLSLENTFKWPAAVVDAAIPLLCFKLVSVSFNGDLIIIFVGETIFFFLF</sequence>
<accession>Q07790</accession>
<name>YD053_YEAST</name>
<dbReference type="EMBL" id="Z74348">
    <property type="protein sequence ID" value="CAA98871.1"/>
    <property type="molecule type" value="Genomic_DNA"/>
</dbReference>
<dbReference type="EMBL" id="AY693261">
    <property type="protein sequence ID" value="AAT93280.1"/>
    <property type="molecule type" value="Genomic_DNA"/>
</dbReference>
<dbReference type="PIR" id="S67869">
    <property type="entry name" value="S67869"/>
</dbReference>
<dbReference type="MINT" id="Q07790"/>
<dbReference type="PaxDb" id="4932-YDR053W"/>
<dbReference type="EnsemblFungi" id="YDR053W_mRNA">
    <property type="protein sequence ID" value="YDR053W"/>
    <property type="gene ID" value="YDR053W"/>
</dbReference>
<dbReference type="AGR" id="SGD:S000002460"/>
<dbReference type="SGD" id="S000002460">
    <property type="gene designation" value="YDR053W"/>
</dbReference>
<dbReference type="HOGENOM" id="CLU_1928786_0_0_1"/>
<dbReference type="GO" id="GO:0016020">
    <property type="term" value="C:membrane"/>
    <property type="evidence" value="ECO:0007669"/>
    <property type="project" value="UniProtKB-SubCell"/>
</dbReference>
<comment type="subcellular location">
    <subcellularLocation>
        <location evidence="2">Membrane</location>
        <topology evidence="2">Multi-pass membrane protein</topology>
    </subcellularLocation>
</comment>
<comment type="miscellaneous">
    <text evidence="2">Partially overlaps DBF4.</text>
</comment>
<comment type="caution">
    <text evidence="3">Product of a dubious gene prediction unlikely to encode a functional protein. Because of that it is not part of the S.cerevisiae S288c complete/reference proteome set.</text>
</comment>
<organism>
    <name type="scientific">Saccharomyces cerevisiae (strain ATCC 204508 / S288c)</name>
    <name type="common">Baker's yeast</name>
    <dbReference type="NCBI Taxonomy" id="559292"/>
    <lineage>
        <taxon>Eukaryota</taxon>
        <taxon>Fungi</taxon>
        <taxon>Dikarya</taxon>
        <taxon>Ascomycota</taxon>
        <taxon>Saccharomycotina</taxon>
        <taxon>Saccharomycetes</taxon>
        <taxon>Saccharomycetales</taxon>
        <taxon>Saccharomycetaceae</taxon>
        <taxon>Saccharomyces</taxon>
    </lineage>
</organism>
<keyword id="KW-0472">Membrane</keyword>
<keyword id="KW-0732">Signal</keyword>
<keyword id="KW-0812">Transmembrane</keyword>
<keyword id="KW-1133">Transmembrane helix</keyword>
<feature type="signal peptide" evidence="1">
    <location>
        <begin position="1"/>
        <end position="19"/>
    </location>
</feature>
<feature type="chain" id="PRO_0000299871" description="Putative uncharacterized protein YDR053W">
    <location>
        <begin position="20"/>
        <end position="131"/>
    </location>
</feature>
<feature type="transmembrane region" description="Helical" evidence="1">
    <location>
        <begin position="33"/>
        <end position="53"/>
    </location>
</feature>
<feature type="transmembrane region" description="Helical" evidence="1">
    <location>
        <begin position="111"/>
        <end position="131"/>
    </location>
</feature>
<proteinExistence type="uncertain"/>
<protein>
    <recommendedName>
        <fullName>Putative uncharacterized protein YDR053W</fullName>
    </recommendedName>
</protein>